<evidence type="ECO:0000255" key="1">
    <source>
        <dbReference type="HAMAP-Rule" id="MF_01616"/>
    </source>
</evidence>
<protein>
    <recommendedName>
        <fullName evidence="1">Membrane-bound lytic murein transglycosylase C</fullName>
        <ecNumber evidence="1">4.2.2.n1</ecNumber>
    </recommendedName>
    <alternativeName>
        <fullName evidence="1">Murein lyase C</fullName>
    </alternativeName>
</protein>
<accession>B8F6F0</accession>
<name>MLTC_GLAP5</name>
<reference key="1">
    <citation type="journal article" date="2009" name="J. Bacteriol.">
        <title>Complete genome sequence of Haemophilus parasuis SH0165.</title>
        <authorList>
            <person name="Yue M."/>
            <person name="Yang F."/>
            <person name="Yang J."/>
            <person name="Bei W."/>
            <person name="Cai X."/>
            <person name="Chen L."/>
            <person name="Dong J."/>
            <person name="Zhou R."/>
            <person name="Jin M."/>
            <person name="Jin Q."/>
            <person name="Chen H."/>
        </authorList>
    </citation>
    <scope>NUCLEOTIDE SEQUENCE [LARGE SCALE GENOMIC DNA]</scope>
    <source>
        <strain>SH0165</strain>
    </source>
</reference>
<feature type="signal peptide" evidence="1">
    <location>
        <begin position="1"/>
        <end position="19"/>
    </location>
</feature>
<feature type="chain" id="PRO_1000185929" description="Membrane-bound lytic murein transglycosylase C">
    <location>
        <begin position="20"/>
        <end position="364"/>
    </location>
</feature>
<feature type="lipid moiety-binding region" description="N-palmitoyl cysteine" evidence="1">
    <location>
        <position position="20"/>
    </location>
</feature>
<feature type="lipid moiety-binding region" description="S-diacylglycerol cysteine" evidence="1">
    <location>
        <position position="20"/>
    </location>
</feature>
<proteinExistence type="inferred from homology"/>
<sequence>MNKYKKFLPLLVLIPFLASCGSDTPTRKGSKKPRPDYSKNTNGLDILMGQFSRNIDQIWGVNELLQASQKDYVKYTDKYYTRSHISFEDGQIIIETLADHNRLRNSIIHTLLMGSDATGIDLFASGDVPISNNPFLAGQVVDQYGRSVTNVAVANDFATYLLQNKLKTRRLKNGHTVTYVTIPMIANHVEVRARRYLPLVRQMSKRYGIDMSLILGIMEVESAFNPYAVSYANAIGLMQVVPRTAGRDIFARKGFGGQPNRDYLYNPSQNIDAGTMFLTILRDEYLEGITDPTSKRYAMISAYNSGAGAVLRVFDNDKLMAIERINNLDPSAIYRILTTAHPSSQARNYLVKVNKAQQKYRNVR</sequence>
<comment type="function">
    <text evidence="1">Murein-degrading enzyme. May play a role in recycling of muropeptides during cell elongation and/or cell division.</text>
</comment>
<comment type="catalytic activity">
    <reaction evidence="1">
        <text>Exolytic cleavage of the (1-&gt;4)-beta-glycosidic linkage between N-acetylmuramic acid (MurNAc) and N-acetylglucosamine (GlcNAc) residues in peptidoglycan, from either the reducing or the non-reducing ends of the peptidoglycan chains, with concomitant formation of a 1,6-anhydrobond in the MurNAc residue.</text>
        <dbReference type="EC" id="4.2.2.n1"/>
    </reaction>
</comment>
<comment type="subcellular location">
    <subcellularLocation>
        <location evidence="1">Cell outer membrane</location>
        <topology evidence="1">Lipid-anchor</topology>
    </subcellularLocation>
</comment>
<comment type="similarity">
    <text evidence="1">Belongs to the transglycosylase Slt family.</text>
</comment>
<dbReference type="EC" id="4.2.2.n1" evidence="1"/>
<dbReference type="EMBL" id="CP001321">
    <property type="protein sequence ID" value="ACL32902.1"/>
    <property type="molecule type" value="Genomic_DNA"/>
</dbReference>
<dbReference type="RefSeq" id="WP_015939718.1">
    <property type="nucleotide sequence ID" value="NC_011852.1"/>
</dbReference>
<dbReference type="SMR" id="B8F6F0"/>
<dbReference type="STRING" id="557723.HAPS_1310"/>
<dbReference type="CAZy" id="GH23">
    <property type="family name" value="Glycoside Hydrolase Family 23"/>
</dbReference>
<dbReference type="KEGG" id="hap:HAPS_1310"/>
<dbReference type="PATRIC" id="fig|557723.8.peg.1293"/>
<dbReference type="HOGENOM" id="CLU_044583_0_0_6"/>
<dbReference type="Proteomes" id="UP000006743">
    <property type="component" value="Chromosome"/>
</dbReference>
<dbReference type="GO" id="GO:0009279">
    <property type="term" value="C:cell outer membrane"/>
    <property type="evidence" value="ECO:0007669"/>
    <property type="project" value="UniProtKB-SubCell"/>
</dbReference>
<dbReference type="GO" id="GO:0016798">
    <property type="term" value="F:hydrolase activity, acting on glycosyl bonds"/>
    <property type="evidence" value="ECO:0007669"/>
    <property type="project" value="InterPro"/>
</dbReference>
<dbReference type="GO" id="GO:0008933">
    <property type="term" value="F:peptidoglycan lytic transglycosylase activity"/>
    <property type="evidence" value="ECO:0007669"/>
    <property type="project" value="UniProtKB-UniRule"/>
</dbReference>
<dbReference type="GO" id="GO:0016998">
    <property type="term" value="P:cell wall macromolecule catabolic process"/>
    <property type="evidence" value="ECO:0007669"/>
    <property type="project" value="UniProtKB-UniRule"/>
</dbReference>
<dbReference type="GO" id="GO:0071555">
    <property type="term" value="P:cell wall organization"/>
    <property type="evidence" value="ECO:0007669"/>
    <property type="project" value="UniProtKB-KW"/>
</dbReference>
<dbReference type="GO" id="GO:0000270">
    <property type="term" value="P:peptidoglycan metabolic process"/>
    <property type="evidence" value="ECO:0007669"/>
    <property type="project" value="InterPro"/>
</dbReference>
<dbReference type="CDD" id="cd16893">
    <property type="entry name" value="LT_MltC_MltE"/>
    <property type="match status" value="1"/>
</dbReference>
<dbReference type="Gene3D" id="1.10.530.10">
    <property type="match status" value="1"/>
</dbReference>
<dbReference type="HAMAP" id="MF_01616">
    <property type="entry name" value="MltC"/>
    <property type="match status" value="1"/>
</dbReference>
<dbReference type="InterPro" id="IPR023346">
    <property type="entry name" value="Lysozyme-like_dom_sf"/>
</dbReference>
<dbReference type="InterPro" id="IPR023664">
    <property type="entry name" value="Murein_transglycosylaseC"/>
</dbReference>
<dbReference type="InterPro" id="IPR024570">
    <property type="entry name" value="Murein_transglycosylaseC_N"/>
</dbReference>
<dbReference type="InterPro" id="IPR000189">
    <property type="entry name" value="Transglyc_AS"/>
</dbReference>
<dbReference type="InterPro" id="IPR008258">
    <property type="entry name" value="Transglycosylase_SLT_dom_1"/>
</dbReference>
<dbReference type="NCBIfam" id="NF008670">
    <property type="entry name" value="PRK11671.1"/>
    <property type="match status" value="1"/>
</dbReference>
<dbReference type="PANTHER" id="PTHR37423:SF2">
    <property type="entry name" value="MEMBRANE-BOUND LYTIC MUREIN TRANSGLYCOSYLASE C"/>
    <property type="match status" value="1"/>
</dbReference>
<dbReference type="PANTHER" id="PTHR37423">
    <property type="entry name" value="SOLUBLE LYTIC MUREIN TRANSGLYCOSYLASE-RELATED"/>
    <property type="match status" value="1"/>
</dbReference>
<dbReference type="Pfam" id="PF11873">
    <property type="entry name" value="Mltc_N"/>
    <property type="match status" value="1"/>
</dbReference>
<dbReference type="Pfam" id="PF01464">
    <property type="entry name" value="SLT"/>
    <property type="match status" value="1"/>
</dbReference>
<dbReference type="SUPFAM" id="SSF53955">
    <property type="entry name" value="Lysozyme-like"/>
    <property type="match status" value="1"/>
</dbReference>
<dbReference type="PROSITE" id="PS51257">
    <property type="entry name" value="PROKAR_LIPOPROTEIN"/>
    <property type="match status" value="1"/>
</dbReference>
<dbReference type="PROSITE" id="PS00922">
    <property type="entry name" value="TRANSGLYCOSYLASE"/>
    <property type="match status" value="1"/>
</dbReference>
<keyword id="KW-0998">Cell outer membrane</keyword>
<keyword id="KW-0961">Cell wall biogenesis/degradation</keyword>
<keyword id="KW-0449">Lipoprotein</keyword>
<keyword id="KW-0456">Lyase</keyword>
<keyword id="KW-0472">Membrane</keyword>
<keyword id="KW-0564">Palmitate</keyword>
<keyword id="KW-1185">Reference proteome</keyword>
<keyword id="KW-0732">Signal</keyword>
<gene>
    <name evidence="1" type="primary">mltC</name>
    <name type="ordered locus">HAPS_1310</name>
</gene>
<organism>
    <name type="scientific">Glaesserella parasuis serovar 5 (strain SH0165)</name>
    <name type="common">Haemophilus parasuis</name>
    <dbReference type="NCBI Taxonomy" id="557723"/>
    <lineage>
        <taxon>Bacteria</taxon>
        <taxon>Pseudomonadati</taxon>
        <taxon>Pseudomonadota</taxon>
        <taxon>Gammaproteobacteria</taxon>
        <taxon>Pasteurellales</taxon>
        <taxon>Pasteurellaceae</taxon>
        <taxon>Glaesserella</taxon>
    </lineage>
</organism>